<sequence>MAARLLLRSLRVLSARSATLPPPSARCSHSGAEARLETPSAKKLTDIGIRRIFSSEHDIFRESVRKFFQEEVIPYHEEWEKAGEVSRELWEKAGKQGLLGINIAEKHGGIGGDLLSTAVTWEEQAYSNCTGPGFSLHSDIVMPYIANYGTKEQIEQFIPQMTAGKCIGAIAMTEPGAGSDLQGVRTNAKRSGSDWILNGSKVFITNGWLSDLVIVVAVTNREARSPAHGISLFLVENGMKGFIKGKKLHKMGMKAQDTAELFFEDVRLPASALLGEENKGFYYLMQELPQERLLIADLAISACEFMFEETRNYVRQRKAFGKTVAHIQTVQHKLAELKTNICVTRAFVDSCLQLHETKRLDSASASMAKYWASELQNTVAYQCVQLHGGWGYMWEYPIAKAYVDARVQPIYGGTNEIMKELIARQIVSDS</sequence>
<accession>P15650</accession>
<feature type="transit peptide" description="Mitochondrion" evidence="5">
    <location>
        <begin position="1"/>
        <end position="30"/>
    </location>
</feature>
<feature type="chain" id="PRO_0000000513" description="Long-chain specific acyl-CoA dehydrogenase, mitochondrial">
    <location>
        <begin position="31"/>
        <end position="430"/>
    </location>
</feature>
<feature type="active site" description="Proton acceptor" evidence="1">
    <location>
        <position position="291"/>
    </location>
</feature>
<feature type="binding site" evidence="1">
    <location>
        <begin position="170"/>
        <end position="179"/>
    </location>
    <ligand>
        <name>FAD</name>
        <dbReference type="ChEBI" id="CHEBI:57692"/>
    </ligand>
</feature>
<feature type="binding site" evidence="1">
    <location>
        <position position="179"/>
    </location>
    <ligand>
        <name>substrate</name>
    </ligand>
</feature>
<feature type="binding site" evidence="1">
    <location>
        <begin position="203"/>
        <end position="205"/>
    </location>
    <ligand>
        <name>FAD</name>
        <dbReference type="ChEBI" id="CHEBI:57692"/>
    </ligand>
</feature>
<feature type="binding site" evidence="1">
    <location>
        <begin position="227"/>
        <end position="228"/>
    </location>
    <ligand>
        <name>substrate</name>
    </ligand>
</feature>
<feature type="binding site" evidence="1">
    <location>
        <position position="282"/>
    </location>
    <ligand>
        <name>substrate</name>
    </ligand>
</feature>
<feature type="binding site" evidence="1">
    <location>
        <begin position="289"/>
        <end position="292"/>
    </location>
    <ligand>
        <name>substrate</name>
    </ligand>
</feature>
<feature type="binding site" evidence="1">
    <location>
        <position position="317"/>
    </location>
    <ligand>
        <name>FAD</name>
        <dbReference type="ChEBI" id="CHEBI:57692"/>
    </ligand>
</feature>
<feature type="binding site" evidence="1">
    <location>
        <position position="328"/>
    </location>
    <ligand>
        <name>FAD</name>
        <dbReference type="ChEBI" id="CHEBI:57692"/>
    </ligand>
</feature>
<feature type="binding site" evidence="1">
    <location>
        <begin position="385"/>
        <end position="389"/>
    </location>
    <ligand>
        <name>FAD</name>
        <dbReference type="ChEBI" id="CHEBI:57692"/>
    </ligand>
</feature>
<feature type="binding site" evidence="1">
    <location>
        <begin position="412"/>
        <end position="413"/>
    </location>
    <ligand>
        <name>substrate</name>
    </ligand>
</feature>
<feature type="binding site" evidence="1">
    <location>
        <begin position="414"/>
        <end position="416"/>
    </location>
    <ligand>
        <name>FAD</name>
        <dbReference type="ChEBI" id="CHEBI:57692"/>
    </ligand>
</feature>
<feature type="modified residue" description="N6-acetyllysine" evidence="3">
    <location>
        <position position="42"/>
    </location>
</feature>
<feature type="modified residue" description="Phosphoserine" evidence="12">
    <location>
        <position position="54"/>
    </location>
</feature>
<feature type="modified residue" description="Phosphoserine" evidence="12">
    <location>
        <position position="55"/>
    </location>
</feature>
<feature type="modified residue" description="N6-acetyllysine; alternate" evidence="3">
    <location>
        <position position="66"/>
    </location>
</feature>
<feature type="modified residue" description="N6-succinyllysine; alternate" evidence="3">
    <location>
        <position position="66"/>
    </location>
</feature>
<feature type="modified residue" description="N6-acetyllysine; alternate" evidence="3">
    <location>
        <position position="81"/>
    </location>
</feature>
<feature type="modified residue" description="N6-succinyllysine; alternate" evidence="3">
    <location>
        <position position="81"/>
    </location>
</feature>
<feature type="modified residue" description="N6-acetyllysine" evidence="3">
    <location>
        <position position="92"/>
    </location>
</feature>
<feature type="modified residue" description="N6-acetyllysine" evidence="3">
    <location>
        <position position="95"/>
    </location>
</feature>
<feature type="modified residue" description="N6-succinyllysine" evidence="3">
    <location>
        <position position="165"/>
    </location>
</feature>
<feature type="modified residue" description="Phosphoserine" evidence="3">
    <location>
        <position position="191"/>
    </location>
</feature>
<feature type="modified residue" description="N6-succinyllysine" evidence="3">
    <location>
        <position position="240"/>
    </location>
</feature>
<feature type="modified residue" description="N6-acetyllysine; alternate" evidence="3">
    <location>
        <position position="254"/>
    </location>
</feature>
<feature type="modified residue" description="N6-succinyllysine; alternate" evidence="3">
    <location>
        <position position="254"/>
    </location>
</feature>
<feature type="modified residue" description="N6-acetyllysine; alternate" evidence="3">
    <location>
        <position position="279"/>
    </location>
</feature>
<feature type="modified residue" description="N6-succinyllysine; alternate" evidence="3">
    <location>
        <position position="279"/>
    </location>
</feature>
<feature type="modified residue" description="N6-acetyllysine" evidence="3">
    <location>
        <position position="318"/>
    </location>
</feature>
<feature type="modified residue" description="N6-acetyllysine; alternate" evidence="3">
    <location>
        <position position="322"/>
    </location>
</feature>
<feature type="modified residue" description="N6-succinyllysine; alternate" evidence="3">
    <location>
        <position position="322"/>
    </location>
</feature>
<feature type="modified residue" description="N6-acetyllysine" evidence="3">
    <location>
        <position position="358"/>
    </location>
</feature>
<feature type="modified residue" description="Phosphoserine" evidence="3">
    <location>
        <position position="362"/>
    </location>
</feature>
<dbReference type="EC" id="1.3.8.8" evidence="4 7"/>
<dbReference type="EMBL" id="J05029">
    <property type="protein sequence ID" value="AAA40668.1"/>
    <property type="molecule type" value="mRNA"/>
</dbReference>
<dbReference type="EMBL" id="L11276">
    <property type="protein sequence ID" value="AAA41514.1"/>
    <property type="molecule type" value="mRNA"/>
</dbReference>
<dbReference type="EMBL" id="BC062006">
    <property type="protein sequence ID" value="AAH62006.1"/>
    <property type="molecule type" value="mRNA"/>
</dbReference>
<dbReference type="PIR" id="A34252">
    <property type="entry name" value="A34252"/>
</dbReference>
<dbReference type="RefSeq" id="NP_036951.1">
    <property type="nucleotide sequence ID" value="NM_012819.3"/>
</dbReference>
<dbReference type="SMR" id="P15650"/>
<dbReference type="BioGRID" id="247326">
    <property type="interactions" value="1"/>
</dbReference>
<dbReference type="FunCoup" id="P15650">
    <property type="interactions" value="261"/>
</dbReference>
<dbReference type="IntAct" id="P15650">
    <property type="interactions" value="11"/>
</dbReference>
<dbReference type="STRING" id="10116.ENSRNOP00000017686"/>
<dbReference type="ChEMBL" id="CHEMBL2176836"/>
<dbReference type="SwissLipids" id="SLP:000001586"/>
<dbReference type="CarbonylDB" id="P15650"/>
<dbReference type="GlyGen" id="P15650">
    <property type="glycosylation" value="3 sites, 1 O-linked glycan (3 sites)"/>
</dbReference>
<dbReference type="iPTMnet" id="P15650"/>
<dbReference type="PhosphoSitePlus" id="P15650"/>
<dbReference type="SwissPalm" id="P15650"/>
<dbReference type="jPOST" id="P15650"/>
<dbReference type="PaxDb" id="10116-ENSRNOP00000017686"/>
<dbReference type="Ensembl" id="ENSRNOT00000017686.8">
    <property type="protein sequence ID" value="ENSRNOP00000017686.4"/>
    <property type="gene ID" value="ENSRNOG00000012966.8"/>
</dbReference>
<dbReference type="GeneID" id="25287"/>
<dbReference type="KEGG" id="rno:25287"/>
<dbReference type="UCSC" id="RGD:2011">
    <property type="organism name" value="rat"/>
</dbReference>
<dbReference type="AGR" id="RGD:2011"/>
<dbReference type="CTD" id="33"/>
<dbReference type="RGD" id="2011">
    <property type="gene designation" value="Acadl"/>
</dbReference>
<dbReference type="eggNOG" id="KOG0141">
    <property type="taxonomic scope" value="Eukaryota"/>
</dbReference>
<dbReference type="GeneTree" id="ENSGT00940000157652"/>
<dbReference type="HOGENOM" id="CLU_018204_0_3_1"/>
<dbReference type="InParanoid" id="P15650"/>
<dbReference type="OMA" id="MWEYPVA"/>
<dbReference type="OrthoDB" id="9988775at2759"/>
<dbReference type="PhylomeDB" id="P15650"/>
<dbReference type="TreeFam" id="TF105054"/>
<dbReference type="Reactome" id="R-RNO-77285">
    <property type="pathway name" value="Beta oxidation of myristoyl-CoA to lauroyl-CoA"/>
</dbReference>
<dbReference type="Reactome" id="R-RNO-77310">
    <property type="pathway name" value="Beta oxidation of lauroyl-CoA to decanoyl-CoA-CoA"/>
</dbReference>
<dbReference type="SABIO-RK" id="P15650"/>
<dbReference type="UniPathway" id="UPA00660"/>
<dbReference type="PRO" id="PR:P15650"/>
<dbReference type="Proteomes" id="UP000002494">
    <property type="component" value="Chromosome 9"/>
</dbReference>
<dbReference type="Bgee" id="ENSRNOG00000012966">
    <property type="expression patterns" value="Expressed in heart and 19 other cell types or tissues"/>
</dbReference>
<dbReference type="GO" id="GO:0005737">
    <property type="term" value="C:cytoplasm"/>
    <property type="evidence" value="ECO:0000318"/>
    <property type="project" value="GO_Central"/>
</dbReference>
<dbReference type="GO" id="GO:0005759">
    <property type="term" value="C:mitochondrial matrix"/>
    <property type="evidence" value="ECO:0000314"/>
    <property type="project" value="BHF-UCL"/>
</dbReference>
<dbReference type="GO" id="GO:0031966">
    <property type="term" value="C:mitochondrial membrane"/>
    <property type="evidence" value="ECO:0000314"/>
    <property type="project" value="BHF-UCL"/>
</dbReference>
<dbReference type="GO" id="GO:0005739">
    <property type="term" value="C:mitochondrion"/>
    <property type="evidence" value="ECO:0000266"/>
    <property type="project" value="RGD"/>
</dbReference>
<dbReference type="GO" id="GO:0050660">
    <property type="term" value="F:flavin adenine dinucleotide binding"/>
    <property type="evidence" value="ECO:0000314"/>
    <property type="project" value="RGD"/>
</dbReference>
<dbReference type="GO" id="GO:0004466">
    <property type="term" value="F:long-chain fatty acyl-CoA dehydrogenase activity"/>
    <property type="evidence" value="ECO:0000314"/>
    <property type="project" value="RGD"/>
</dbReference>
<dbReference type="GO" id="GO:0042803">
    <property type="term" value="F:protein homodimerization activity"/>
    <property type="evidence" value="ECO:0000314"/>
    <property type="project" value="RGD"/>
</dbReference>
<dbReference type="GO" id="GO:0042413">
    <property type="term" value="P:carnitine catabolic process"/>
    <property type="evidence" value="ECO:0000266"/>
    <property type="project" value="RGD"/>
</dbReference>
<dbReference type="GO" id="GO:0019254">
    <property type="term" value="P:carnitine metabolic process, CoA-linked"/>
    <property type="evidence" value="ECO:0000266"/>
    <property type="project" value="RGD"/>
</dbReference>
<dbReference type="GO" id="GO:0033539">
    <property type="term" value="P:fatty acid beta-oxidation using acyl-CoA dehydrogenase"/>
    <property type="evidence" value="ECO:0000314"/>
    <property type="project" value="RGD"/>
</dbReference>
<dbReference type="GO" id="GO:0009062">
    <property type="term" value="P:fatty acid catabolic process"/>
    <property type="evidence" value="ECO:0000266"/>
    <property type="project" value="RGD"/>
</dbReference>
<dbReference type="GO" id="GO:0016042">
    <property type="term" value="P:lipid catabolic process"/>
    <property type="evidence" value="ECO:0000266"/>
    <property type="project" value="RGD"/>
</dbReference>
<dbReference type="GO" id="GO:0042758">
    <property type="term" value="P:long-chain fatty acid catabolic process"/>
    <property type="evidence" value="ECO:0000314"/>
    <property type="project" value="RGD"/>
</dbReference>
<dbReference type="GO" id="GO:0045717">
    <property type="term" value="P:negative regulation of fatty acid biosynthetic process"/>
    <property type="evidence" value="ECO:0000266"/>
    <property type="project" value="RGD"/>
</dbReference>
<dbReference type="GO" id="GO:0046322">
    <property type="term" value="P:negative regulation of fatty acid oxidation"/>
    <property type="evidence" value="ECO:0000266"/>
    <property type="project" value="RGD"/>
</dbReference>
<dbReference type="GO" id="GO:0120162">
    <property type="term" value="P:positive regulation of cold-induced thermogenesis"/>
    <property type="evidence" value="ECO:0000250"/>
    <property type="project" value="YuBioLab"/>
</dbReference>
<dbReference type="GO" id="GO:0090181">
    <property type="term" value="P:regulation of cholesterol metabolic process"/>
    <property type="evidence" value="ECO:0000266"/>
    <property type="project" value="RGD"/>
</dbReference>
<dbReference type="GO" id="GO:0009409">
    <property type="term" value="P:response to cold"/>
    <property type="evidence" value="ECO:0000266"/>
    <property type="project" value="RGD"/>
</dbReference>
<dbReference type="GO" id="GO:0001659">
    <property type="term" value="P:temperature homeostasis"/>
    <property type="evidence" value="ECO:0000266"/>
    <property type="project" value="RGD"/>
</dbReference>
<dbReference type="CDD" id="cd01160">
    <property type="entry name" value="LCAD"/>
    <property type="match status" value="1"/>
</dbReference>
<dbReference type="FunFam" id="2.40.110.10:FF:000002">
    <property type="entry name" value="Acyl-CoA dehydrogenase fadE12"/>
    <property type="match status" value="1"/>
</dbReference>
<dbReference type="FunFam" id="1.20.140.10:FF:000020">
    <property type="entry name" value="Long-chain specific acyl-CoA dehydrogenase, mitochondrial"/>
    <property type="match status" value="1"/>
</dbReference>
<dbReference type="FunFam" id="1.10.540.10:FF:000017">
    <property type="entry name" value="long-chain specific acyl-CoA dehydrogenase, mitochondrial"/>
    <property type="match status" value="1"/>
</dbReference>
<dbReference type="Gene3D" id="1.10.540.10">
    <property type="entry name" value="Acyl-CoA dehydrogenase/oxidase, N-terminal domain"/>
    <property type="match status" value="1"/>
</dbReference>
<dbReference type="Gene3D" id="2.40.110.10">
    <property type="entry name" value="Butyryl-CoA Dehydrogenase, subunit A, domain 2"/>
    <property type="match status" value="1"/>
</dbReference>
<dbReference type="Gene3D" id="1.20.140.10">
    <property type="entry name" value="Butyryl-CoA Dehydrogenase, subunit A, domain 3"/>
    <property type="match status" value="1"/>
</dbReference>
<dbReference type="InterPro" id="IPR050741">
    <property type="entry name" value="Acyl-CoA_dehydrogenase"/>
</dbReference>
<dbReference type="InterPro" id="IPR006089">
    <property type="entry name" value="Acyl-CoA_DH_CS"/>
</dbReference>
<dbReference type="InterPro" id="IPR006091">
    <property type="entry name" value="Acyl-CoA_Oxase/DH_mid-dom"/>
</dbReference>
<dbReference type="InterPro" id="IPR046373">
    <property type="entry name" value="Acyl-CoA_Oxase/DH_mid-dom_sf"/>
</dbReference>
<dbReference type="InterPro" id="IPR036250">
    <property type="entry name" value="AcylCo_DH-like_C"/>
</dbReference>
<dbReference type="InterPro" id="IPR009075">
    <property type="entry name" value="AcylCo_DH/oxidase_C"/>
</dbReference>
<dbReference type="InterPro" id="IPR013786">
    <property type="entry name" value="AcylCoA_DH/ox_N"/>
</dbReference>
<dbReference type="InterPro" id="IPR037069">
    <property type="entry name" value="AcylCoA_DH/ox_N_sf"/>
</dbReference>
<dbReference type="InterPro" id="IPR009100">
    <property type="entry name" value="AcylCoA_DH/oxidase_NM_dom_sf"/>
</dbReference>
<dbReference type="InterPro" id="IPR034179">
    <property type="entry name" value="LCAD"/>
</dbReference>
<dbReference type="PANTHER" id="PTHR48083:SF20">
    <property type="entry name" value="LONG-CHAIN SPECIFIC ACYL-COA DEHYDROGENASE, MITOCHONDRIAL"/>
    <property type="match status" value="1"/>
</dbReference>
<dbReference type="PANTHER" id="PTHR48083">
    <property type="entry name" value="MEDIUM-CHAIN SPECIFIC ACYL-COA DEHYDROGENASE, MITOCHONDRIAL-RELATED"/>
    <property type="match status" value="1"/>
</dbReference>
<dbReference type="Pfam" id="PF00441">
    <property type="entry name" value="Acyl-CoA_dh_1"/>
    <property type="match status" value="1"/>
</dbReference>
<dbReference type="Pfam" id="PF02770">
    <property type="entry name" value="Acyl-CoA_dh_M"/>
    <property type="match status" value="1"/>
</dbReference>
<dbReference type="Pfam" id="PF02771">
    <property type="entry name" value="Acyl-CoA_dh_N"/>
    <property type="match status" value="1"/>
</dbReference>
<dbReference type="SUPFAM" id="SSF47203">
    <property type="entry name" value="Acyl-CoA dehydrogenase C-terminal domain-like"/>
    <property type="match status" value="1"/>
</dbReference>
<dbReference type="SUPFAM" id="SSF56645">
    <property type="entry name" value="Acyl-CoA dehydrogenase NM domain-like"/>
    <property type="match status" value="1"/>
</dbReference>
<dbReference type="PROSITE" id="PS00072">
    <property type="entry name" value="ACYL_COA_DH_1"/>
    <property type="match status" value="1"/>
</dbReference>
<dbReference type="PROSITE" id="PS00073">
    <property type="entry name" value="ACYL_COA_DH_2"/>
    <property type="match status" value="1"/>
</dbReference>
<evidence type="ECO:0000250" key="1">
    <source>
        <dbReference type="UniProtKB" id="P26440"/>
    </source>
</evidence>
<evidence type="ECO:0000250" key="2">
    <source>
        <dbReference type="UniProtKB" id="P28330"/>
    </source>
</evidence>
<evidence type="ECO:0000250" key="3">
    <source>
        <dbReference type="UniProtKB" id="P51174"/>
    </source>
</evidence>
<evidence type="ECO:0000269" key="4">
    <source>
    </source>
</evidence>
<evidence type="ECO:0000269" key="5">
    <source>
    </source>
</evidence>
<evidence type="ECO:0000269" key="6">
    <source>
    </source>
</evidence>
<evidence type="ECO:0000269" key="7">
    <source>
    </source>
</evidence>
<evidence type="ECO:0000303" key="8">
    <source>
    </source>
</evidence>
<evidence type="ECO:0000305" key="9"/>
<evidence type="ECO:0000305" key="10">
    <source>
    </source>
</evidence>
<evidence type="ECO:0000312" key="11">
    <source>
        <dbReference type="RGD" id="2011"/>
    </source>
</evidence>
<evidence type="ECO:0007744" key="12">
    <source>
    </source>
</evidence>
<protein>
    <recommendedName>
        <fullName>Long-chain specific acyl-CoA dehydrogenase, mitochondrial</fullName>
        <shortName>LCAD</shortName>
        <ecNumber evidence="4 7">1.3.8.8</ecNumber>
    </recommendedName>
</protein>
<name>ACADL_RAT</name>
<organism>
    <name type="scientific">Rattus norvegicus</name>
    <name type="common">Rat</name>
    <dbReference type="NCBI Taxonomy" id="10116"/>
    <lineage>
        <taxon>Eukaryota</taxon>
        <taxon>Metazoa</taxon>
        <taxon>Chordata</taxon>
        <taxon>Craniata</taxon>
        <taxon>Vertebrata</taxon>
        <taxon>Euteleostomi</taxon>
        <taxon>Mammalia</taxon>
        <taxon>Eutheria</taxon>
        <taxon>Euarchontoglires</taxon>
        <taxon>Glires</taxon>
        <taxon>Rodentia</taxon>
        <taxon>Myomorpha</taxon>
        <taxon>Muroidea</taxon>
        <taxon>Muridae</taxon>
        <taxon>Murinae</taxon>
        <taxon>Rattus</taxon>
    </lineage>
</organism>
<keyword id="KW-0007">Acetylation</keyword>
<keyword id="KW-0903">Direct protein sequencing</keyword>
<keyword id="KW-0274">FAD</keyword>
<keyword id="KW-0276">Fatty acid metabolism</keyword>
<keyword id="KW-0285">Flavoprotein</keyword>
<keyword id="KW-0443">Lipid metabolism</keyword>
<keyword id="KW-0496">Mitochondrion</keyword>
<keyword id="KW-0560">Oxidoreductase</keyword>
<keyword id="KW-0597">Phosphoprotein</keyword>
<keyword id="KW-1185">Reference proteome</keyword>
<keyword id="KW-0809">Transit peptide</keyword>
<reference key="1">
    <citation type="journal article" date="1989" name="J. Biol. Chem.">
        <title>Molecular cloning and nucleotide sequence of cDNAs encoding the precursors of rat long chain acyl-coenzyme A, short chain acyl-coenzyme A, and isovaleryl-coenzyme A dehydrogenases. Sequence homology of four enzymes of the acyl-CoA dehydrogenase family.</title>
        <authorList>
            <person name="Matsubara Y."/>
            <person name="Indo Y."/>
            <person name="Naito E."/>
            <person name="Ozasa H."/>
            <person name="Glassberg R."/>
            <person name="Vockley J."/>
            <person name="Ikeda Y."/>
            <person name="Kraus J."/>
            <person name="Tanaka K."/>
        </authorList>
    </citation>
    <scope>NUCLEOTIDE SEQUENCE [MRNA]</scope>
    <scope>PARTIAL PROTEIN SEQUENCE</scope>
</reference>
<reference key="2">
    <citation type="journal article" date="1993" name="Biochim. Biophys. Acta">
        <title>Tissue specific and developmental expression of rat long- and medium-chain acyl-CoA dehydrogenases.</title>
        <authorList>
            <person name="Hainline B.E."/>
            <person name="Kahlenbeck D.J."/>
            <person name="Grant J."/>
            <person name="Strauss A.W."/>
        </authorList>
    </citation>
    <scope>NUCLEOTIDE SEQUENCE [MRNA]</scope>
    <source>
        <strain>Sprague-Dawley</strain>
        <tissue>Aorta</tissue>
    </source>
</reference>
<reference key="3">
    <citation type="journal article" date="2004" name="Genome Res.">
        <title>The status, quality, and expansion of the NIH full-length cDNA project: the Mammalian Gene Collection (MGC).</title>
        <authorList>
            <consortium name="The MGC Project Team"/>
        </authorList>
    </citation>
    <scope>NUCLEOTIDE SEQUENCE [LARGE SCALE MRNA]</scope>
    <source>
        <tissue>Prostate</tissue>
    </source>
</reference>
<reference key="4">
    <citation type="submission" date="2006-11" db="UniProtKB">
        <authorList>
            <person name="Lubec G."/>
            <person name="Afjehi-Sadat L."/>
        </authorList>
    </citation>
    <scope>PROTEIN SEQUENCE OF 52-61 AND 255-267</scope>
    <scope>IDENTIFICATION BY MASS SPECTROMETRY</scope>
    <source>
        <strain>Sprague-Dawley</strain>
        <tissue>Spinal cord</tissue>
    </source>
</reference>
<reference key="5">
    <citation type="journal article" date="1985" name="J. Biol. Chem.">
        <title>Purification and characterization of short-chain, medium-chain, and long-chain acyl-CoA dehydrogenases from rat liver mitochondria. Isolation of the holo- and apoenzymes and conversion of the apoenzyme to the holoenzyme.</title>
        <authorList>
            <person name="Ikeda Y."/>
            <person name="Okamura-Ikeda K."/>
            <person name="Tanaka K."/>
        </authorList>
    </citation>
    <scope>FUNCTION</scope>
    <scope>CATALYTIC ACTIVITY</scope>
    <scope>SUBSTRATE SPECIFICITY</scope>
    <scope>COFACTOR</scope>
    <scope>ACTIVITY REGULATION</scope>
    <scope>BIOPHYSICOCHEMICAL PROPERTIES</scope>
    <scope>PATHWAY</scope>
    <scope>SUBUNIT</scope>
</reference>
<reference key="6">
    <citation type="journal article" date="1987" name="Arch. Biochem. Biophys.">
        <title>Biosynthesis of four rat liver mitochondrial acyl-CoA dehydrogenases: in vitro synthesis, import into mitochondria, and processing of their precursors in a cell-free system and in cultured cells.</title>
        <authorList>
            <person name="Ikeda Y."/>
            <person name="Keese S.M."/>
            <person name="Fenton W.A."/>
            <person name="Tanaka K."/>
        </authorList>
    </citation>
    <scope>SUBUNIT</scope>
    <scope>SUBCELLULAR LOCATION</scope>
</reference>
<reference key="7">
    <citation type="journal article" date="2004" name="J. Biol. Chem.">
        <title>Leaky beta-oxidation of a trans-fatty acid: incomplete beta-oxidation of elaidic acid is due to the accumulation of 5-trans-tetradecenoyl-CoA and its hydrolysis and conversion to 5-trans-tetradecenoylcarnitine in the matrix of rat mitochondria.</title>
        <authorList>
            <person name="Yu W."/>
            <person name="Liang X."/>
            <person name="Ensenauer R.E."/>
            <person name="Vockley J."/>
            <person name="Sweetman L."/>
            <person name="Schulz H."/>
        </authorList>
    </citation>
    <scope>FUNCTION</scope>
    <scope>CATALYTIC ACTIVITY</scope>
    <scope>BIOPHYSICOCHEMICAL PROPERTIES</scope>
</reference>
<reference key="8">
    <citation type="journal article" date="2012" name="Nat. Commun.">
        <title>Quantitative maps of protein phosphorylation sites across 14 different rat organs and tissues.</title>
        <authorList>
            <person name="Lundby A."/>
            <person name="Secher A."/>
            <person name="Lage K."/>
            <person name="Nordsborg N.B."/>
            <person name="Dmytriyev A."/>
            <person name="Lundby C."/>
            <person name="Olsen J.V."/>
        </authorList>
    </citation>
    <scope>PHOSPHORYLATION [LARGE SCALE ANALYSIS] AT SER-54 AND SER-55</scope>
    <scope>IDENTIFICATION BY MASS SPECTROMETRY [LARGE SCALE ANALYSIS]</scope>
</reference>
<gene>
    <name evidence="11" type="primary">Acadl</name>
</gene>
<proteinExistence type="evidence at protein level"/>
<comment type="function">
    <text evidence="4 7 8">Long-chain specific acyl-CoA dehydrogenase is one of the acyl-CoA dehydrogenases that catalyze the first step of mitochondrial fatty acid beta-oxidation, an aerobic process breaking down fatty acids into acetyl-CoA and allowing the production of energy from fats (PubMed:3968063). The first step of fatty acid beta-oxidation consists in the removal of one hydrogen from C-2 and C-3 of the straight-chain fatty acyl-CoA thioester, resulting in the formation of trans-2-enoyl-CoA (PubMed:3968063). Among the different mitochondrial acyl-CoA dehydrogenases, long-chain specific acyl-CoA dehydrogenase can act on saturated and unsaturated acyl-CoAs with 6 to 24 carbons with a preference for 8 to 18 carbons long primary chains (PubMed:15466478, PubMed:3968063).</text>
</comment>
<comment type="catalytic activity">
    <reaction evidence="4 7">
        <text>a long-chain 2,3-saturated fatty acyl-CoA + oxidized [electron-transfer flavoprotein] + H(+) = a long-chain (2E)-enoyl-CoA + reduced [electron-transfer flavoprotein]</text>
        <dbReference type="Rhea" id="RHEA:17721"/>
        <dbReference type="Rhea" id="RHEA-COMP:10685"/>
        <dbReference type="Rhea" id="RHEA-COMP:10686"/>
        <dbReference type="ChEBI" id="CHEBI:15378"/>
        <dbReference type="ChEBI" id="CHEBI:57692"/>
        <dbReference type="ChEBI" id="CHEBI:58307"/>
        <dbReference type="ChEBI" id="CHEBI:83721"/>
        <dbReference type="ChEBI" id="CHEBI:83727"/>
        <dbReference type="EC" id="1.3.8.8"/>
    </reaction>
    <physiologicalReaction direction="left-to-right" evidence="10">
        <dbReference type="Rhea" id="RHEA:17722"/>
    </physiologicalReaction>
</comment>
<comment type="catalytic activity">
    <reaction evidence="7">
        <text>octanoyl-CoA + oxidized [electron-transfer flavoprotein] + H(+) = (2E)-octenoyl-CoA + reduced [electron-transfer flavoprotein]</text>
        <dbReference type="Rhea" id="RHEA:48180"/>
        <dbReference type="Rhea" id="RHEA-COMP:10685"/>
        <dbReference type="Rhea" id="RHEA-COMP:10686"/>
        <dbReference type="ChEBI" id="CHEBI:15378"/>
        <dbReference type="ChEBI" id="CHEBI:57386"/>
        <dbReference type="ChEBI" id="CHEBI:57692"/>
        <dbReference type="ChEBI" id="CHEBI:58307"/>
        <dbReference type="ChEBI" id="CHEBI:62242"/>
    </reaction>
    <physiologicalReaction direction="left-to-right" evidence="10">
        <dbReference type="Rhea" id="RHEA:48181"/>
    </physiologicalReaction>
</comment>
<comment type="catalytic activity">
    <reaction evidence="7">
        <text>decanoyl-CoA + oxidized [electron-transfer flavoprotein] + H(+) = (2E)-decenoyl-CoA + reduced [electron-transfer flavoprotein]</text>
        <dbReference type="Rhea" id="RHEA:48176"/>
        <dbReference type="Rhea" id="RHEA-COMP:10685"/>
        <dbReference type="Rhea" id="RHEA-COMP:10686"/>
        <dbReference type="ChEBI" id="CHEBI:15378"/>
        <dbReference type="ChEBI" id="CHEBI:57692"/>
        <dbReference type="ChEBI" id="CHEBI:58307"/>
        <dbReference type="ChEBI" id="CHEBI:61406"/>
        <dbReference type="ChEBI" id="CHEBI:61430"/>
    </reaction>
    <physiologicalReaction direction="left-to-right" evidence="10">
        <dbReference type="Rhea" id="RHEA:48177"/>
    </physiologicalReaction>
</comment>
<comment type="catalytic activity">
    <reaction evidence="7">
        <text>dodecanoyl-CoA + oxidized [electron-transfer flavoprotein] + H(+) = (2E)-dodecenoyl-CoA + reduced [electron-transfer flavoprotein]</text>
        <dbReference type="Rhea" id="RHEA:47296"/>
        <dbReference type="Rhea" id="RHEA-COMP:10685"/>
        <dbReference type="Rhea" id="RHEA-COMP:10686"/>
        <dbReference type="ChEBI" id="CHEBI:15378"/>
        <dbReference type="ChEBI" id="CHEBI:57330"/>
        <dbReference type="ChEBI" id="CHEBI:57375"/>
        <dbReference type="ChEBI" id="CHEBI:57692"/>
        <dbReference type="ChEBI" id="CHEBI:58307"/>
    </reaction>
    <physiologicalReaction direction="left-to-right" evidence="10">
        <dbReference type="Rhea" id="RHEA:47297"/>
    </physiologicalReaction>
</comment>
<comment type="catalytic activity">
    <reaction evidence="4 7">
        <text>tetradecanoyl-CoA + oxidized [electron-transfer flavoprotein] + H(+) = (2E)-tetradecenoyl-CoA + reduced [electron-transfer flavoprotein]</text>
        <dbReference type="Rhea" id="RHEA:47316"/>
        <dbReference type="Rhea" id="RHEA-COMP:10685"/>
        <dbReference type="Rhea" id="RHEA-COMP:10686"/>
        <dbReference type="ChEBI" id="CHEBI:15378"/>
        <dbReference type="ChEBI" id="CHEBI:57385"/>
        <dbReference type="ChEBI" id="CHEBI:57692"/>
        <dbReference type="ChEBI" id="CHEBI:58307"/>
        <dbReference type="ChEBI" id="CHEBI:61405"/>
    </reaction>
    <physiologicalReaction direction="left-to-right" evidence="10">
        <dbReference type="Rhea" id="RHEA:47317"/>
    </physiologicalReaction>
</comment>
<comment type="catalytic activity">
    <reaction evidence="7">
        <text>oxidized [electron-transfer flavoprotein] + hexadecanoyl-CoA + H(+) = (2E)-hexadecenoyl-CoA + reduced [electron-transfer flavoprotein]</text>
        <dbReference type="Rhea" id="RHEA:43448"/>
        <dbReference type="Rhea" id="RHEA-COMP:10685"/>
        <dbReference type="Rhea" id="RHEA-COMP:10686"/>
        <dbReference type="ChEBI" id="CHEBI:15378"/>
        <dbReference type="ChEBI" id="CHEBI:57379"/>
        <dbReference type="ChEBI" id="CHEBI:57692"/>
        <dbReference type="ChEBI" id="CHEBI:58307"/>
        <dbReference type="ChEBI" id="CHEBI:61526"/>
    </reaction>
    <physiologicalReaction direction="left-to-right" evidence="10">
        <dbReference type="Rhea" id="RHEA:43449"/>
    </physiologicalReaction>
</comment>
<comment type="catalytic activity">
    <reaction evidence="7">
        <text>octadecanoyl-CoA + oxidized [electron-transfer flavoprotein] + H(+) = (2E)-octadecenoyl-CoA + reduced [electron-transfer flavoprotein]</text>
        <dbReference type="Rhea" id="RHEA:47240"/>
        <dbReference type="Rhea" id="RHEA-COMP:10685"/>
        <dbReference type="Rhea" id="RHEA-COMP:10686"/>
        <dbReference type="ChEBI" id="CHEBI:15378"/>
        <dbReference type="ChEBI" id="CHEBI:57394"/>
        <dbReference type="ChEBI" id="CHEBI:57692"/>
        <dbReference type="ChEBI" id="CHEBI:58307"/>
        <dbReference type="ChEBI" id="CHEBI:71412"/>
    </reaction>
    <physiologicalReaction direction="left-to-right" evidence="10">
        <dbReference type="Rhea" id="RHEA:47241"/>
    </physiologicalReaction>
</comment>
<comment type="catalytic activity">
    <reaction evidence="4">
        <text>(5E)-tetradecenoyl-CoA + oxidized [electron-transfer flavoprotein] + H(+) = (2E,5E)-tetradecadienoyl-CoA + reduced [electron-transfer flavoprotein]</text>
        <dbReference type="Rhea" id="RHEA:49828"/>
        <dbReference type="Rhea" id="RHEA-COMP:10685"/>
        <dbReference type="Rhea" id="RHEA-COMP:10686"/>
        <dbReference type="ChEBI" id="CHEBI:15378"/>
        <dbReference type="ChEBI" id="CHEBI:57692"/>
        <dbReference type="ChEBI" id="CHEBI:58307"/>
        <dbReference type="ChEBI" id="CHEBI:131943"/>
        <dbReference type="ChEBI" id="CHEBI:131944"/>
    </reaction>
    <physiologicalReaction direction="left-to-right" evidence="10">
        <dbReference type="Rhea" id="RHEA:49829"/>
    </physiologicalReaction>
</comment>
<comment type="catalytic activity">
    <reaction evidence="4">
        <text>(5Z)-tetradecenoyl-CoA + oxidized [electron-transfer flavoprotein] + H(+) = (2E,5Z)-tetradecadienoyl-CoA + reduced [electron-transfer flavoprotein]</text>
        <dbReference type="Rhea" id="RHEA:47448"/>
        <dbReference type="Rhea" id="RHEA-COMP:10685"/>
        <dbReference type="Rhea" id="RHEA-COMP:10686"/>
        <dbReference type="ChEBI" id="CHEBI:15378"/>
        <dbReference type="ChEBI" id="CHEBI:57692"/>
        <dbReference type="ChEBI" id="CHEBI:58307"/>
        <dbReference type="ChEBI" id="CHEBI:84650"/>
        <dbReference type="ChEBI" id="CHEBI:87701"/>
    </reaction>
    <physiologicalReaction direction="left-to-right" evidence="10">
        <dbReference type="Rhea" id="RHEA:47449"/>
    </physiologicalReaction>
</comment>
<comment type="catalytic activity">
    <reaction evidence="7">
        <text>oxidized [electron-transfer flavoprotein] + (9Z)-octadecenoyl-CoA + H(+) = (2E,9Z)-octadecadienoyl-CoA + reduced [electron-transfer flavoprotein]</text>
        <dbReference type="Rhea" id="RHEA:47300"/>
        <dbReference type="Rhea" id="RHEA-COMP:10685"/>
        <dbReference type="Rhea" id="RHEA-COMP:10686"/>
        <dbReference type="ChEBI" id="CHEBI:15378"/>
        <dbReference type="ChEBI" id="CHEBI:57387"/>
        <dbReference type="ChEBI" id="CHEBI:57692"/>
        <dbReference type="ChEBI" id="CHEBI:58307"/>
        <dbReference type="ChEBI" id="CHEBI:77553"/>
    </reaction>
    <physiologicalReaction direction="left-to-right" evidence="10">
        <dbReference type="Rhea" id="RHEA:47301"/>
    </physiologicalReaction>
</comment>
<comment type="catalytic activity">
    <reaction evidence="2">
        <text>hexanoyl-CoA + oxidized [electron-transfer flavoprotein] + H(+) = (2E)-hexenoyl-CoA + reduced [electron-transfer flavoprotein]</text>
        <dbReference type="Rhea" id="RHEA:43464"/>
        <dbReference type="Rhea" id="RHEA-COMP:10685"/>
        <dbReference type="Rhea" id="RHEA-COMP:10686"/>
        <dbReference type="ChEBI" id="CHEBI:15378"/>
        <dbReference type="ChEBI" id="CHEBI:57692"/>
        <dbReference type="ChEBI" id="CHEBI:58307"/>
        <dbReference type="ChEBI" id="CHEBI:62077"/>
        <dbReference type="ChEBI" id="CHEBI:62620"/>
    </reaction>
    <physiologicalReaction direction="left-to-right" evidence="2">
        <dbReference type="Rhea" id="RHEA:43465"/>
    </physiologicalReaction>
</comment>
<comment type="catalytic activity">
    <reaction evidence="2">
        <text>eicosanoyl-CoA + oxidized [electron-transfer flavoprotein] + H(+) = (2E)-eicosenoyl-CoA + reduced [electron-transfer flavoprotein]</text>
        <dbReference type="Rhea" id="RHEA:47236"/>
        <dbReference type="Rhea" id="RHEA-COMP:10685"/>
        <dbReference type="Rhea" id="RHEA-COMP:10686"/>
        <dbReference type="ChEBI" id="CHEBI:15378"/>
        <dbReference type="ChEBI" id="CHEBI:57380"/>
        <dbReference type="ChEBI" id="CHEBI:57692"/>
        <dbReference type="ChEBI" id="CHEBI:58307"/>
        <dbReference type="ChEBI" id="CHEBI:74691"/>
    </reaction>
    <physiologicalReaction direction="left-to-right" evidence="2">
        <dbReference type="Rhea" id="RHEA:47237"/>
    </physiologicalReaction>
</comment>
<comment type="catalytic activity">
    <reaction evidence="2">
        <text>docosanoyl-CoA + oxidized [electron-transfer flavoprotein] + H(+) = (2E)-docosenoyl-CoA + reduced [electron-transfer flavoprotein]</text>
        <dbReference type="Rhea" id="RHEA:47228"/>
        <dbReference type="Rhea" id="RHEA-COMP:10685"/>
        <dbReference type="Rhea" id="RHEA-COMP:10686"/>
        <dbReference type="ChEBI" id="CHEBI:15378"/>
        <dbReference type="ChEBI" id="CHEBI:57692"/>
        <dbReference type="ChEBI" id="CHEBI:58307"/>
        <dbReference type="ChEBI" id="CHEBI:65059"/>
        <dbReference type="ChEBI" id="CHEBI:74692"/>
    </reaction>
    <physiologicalReaction direction="left-to-right" evidence="2">
        <dbReference type="Rhea" id="RHEA:47229"/>
    </physiologicalReaction>
</comment>
<comment type="catalytic activity">
    <reaction evidence="2">
        <text>tetracosanoyl-CoA + oxidized [electron-transfer flavoprotein] + H(+) = (2E)-tetracosenoyl-CoA + reduced [electron-transfer flavoprotein]</text>
        <dbReference type="Rhea" id="RHEA:47232"/>
        <dbReference type="Rhea" id="RHEA-COMP:10685"/>
        <dbReference type="Rhea" id="RHEA-COMP:10686"/>
        <dbReference type="ChEBI" id="CHEBI:15378"/>
        <dbReference type="ChEBI" id="CHEBI:57692"/>
        <dbReference type="ChEBI" id="CHEBI:58307"/>
        <dbReference type="ChEBI" id="CHEBI:65052"/>
        <dbReference type="ChEBI" id="CHEBI:74693"/>
    </reaction>
    <physiologicalReaction direction="left-to-right" evidence="2">
        <dbReference type="Rhea" id="RHEA:47233"/>
    </physiologicalReaction>
</comment>
<comment type="cofactor">
    <cofactor evidence="7">
        <name>FAD</name>
        <dbReference type="ChEBI" id="CHEBI:57692"/>
    </cofactor>
</comment>
<comment type="activity regulation">
    <text evidence="7">Inhibited by crotonyl-CoA, 2-octenoyl-CoA and 2-hexadecenoyl-CoA.</text>
</comment>
<comment type="biophysicochemical properties">
    <kinetics>
        <KM evidence="7">123 uM for octanoyl-CoA (at 32 degrees Celsius and pH 8.0)</KM>
        <KM evidence="7">24.3 uM for decanoyl-CoA (at 32 degrees Celsius and pH 8.0)</KM>
        <KM evidence="7">9 uM for dodecanoyl-CoA (at 32 degrees Celsius and pH 8.0)</KM>
        <KM evidence="7">7.4 uM for tetradecanoyl-CoA (at 32 degrees Celsius and pH 8.0)</KM>
        <KM evidence="7">2.5 uM for hexadecanoyl-CoA (at 32 degrees Celsius and pH 8.0)</KM>
        <KM evidence="7">5.4 uM for octadecanoyl-CoA (at 32 degrees Celsius and pH 8.0)</KM>
        <KM evidence="7">6.5 uM for (9Z)-octadecenoyl-CoA (at 32 degrees Celsius and pH 8.0)</KM>
        <KM evidence="4">0.41 uM for tetradecanoyl-CoA</KM>
        <KM evidence="4">0.4 uM for (5Z)-tetradecenoyl-CoA</KM>
        <KM evidence="4">1.6 uM for (5E)-tetradecenoyl-CoA</KM>
    </kinetics>
    <phDependence>
        <text evidence="7">Optimum pH is 8.0.</text>
    </phDependence>
</comment>
<comment type="pathway">
    <text evidence="8">Lipid metabolism; mitochondrial fatty acid beta-oxidation.</text>
</comment>
<comment type="subunit">
    <text evidence="6 7">Homotetramer.</text>
</comment>
<comment type="subcellular location">
    <subcellularLocation>
        <location evidence="6">Mitochondrion matrix</location>
    </subcellularLocation>
</comment>
<comment type="PTM">
    <text evidence="3">Acetylation at Lys-318 and Lys-322 in proximity of the cofactor-binding sites strongly reduces catalytic activity. These sites are deacetylated by SIRT3.</text>
</comment>
<comment type="similarity">
    <text evidence="9">Belongs to the acyl-CoA dehydrogenase family.</text>
</comment>